<organism>
    <name type="scientific">Staphylococcus aureus (strain MSSA476)</name>
    <dbReference type="NCBI Taxonomy" id="282459"/>
    <lineage>
        <taxon>Bacteria</taxon>
        <taxon>Bacillati</taxon>
        <taxon>Bacillota</taxon>
        <taxon>Bacilli</taxon>
        <taxon>Bacillales</taxon>
        <taxon>Staphylococcaceae</taxon>
        <taxon>Staphylococcus</taxon>
    </lineage>
</organism>
<dbReference type="EC" id="1.1.1.23" evidence="1"/>
<dbReference type="EMBL" id="BX571857">
    <property type="protein sequence ID" value="CAG44380.1"/>
    <property type="molecule type" value="Genomic_DNA"/>
</dbReference>
<dbReference type="SMR" id="Q6G5Z7"/>
<dbReference type="KEGG" id="sas:SAS2563"/>
<dbReference type="HOGENOM" id="CLU_006732_3_3_9"/>
<dbReference type="UniPathway" id="UPA00031">
    <property type="reaction ID" value="UER00014"/>
</dbReference>
<dbReference type="GO" id="GO:0005829">
    <property type="term" value="C:cytosol"/>
    <property type="evidence" value="ECO:0007669"/>
    <property type="project" value="TreeGrafter"/>
</dbReference>
<dbReference type="GO" id="GO:0004399">
    <property type="term" value="F:histidinol dehydrogenase activity"/>
    <property type="evidence" value="ECO:0007669"/>
    <property type="project" value="UniProtKB-UniRule"/>
</dbReference>
<dbReference type="GO" id="GO:0051287">
    <property type="term" value="F:NAD binding"/>
    <property type="evidence" value="ECO:0007669"/>
    <property type="project" value="InterPro"/>
</dbReference>
<dbReference type="GO" id="GO:0008270">
    <property type="term" value="F:zinc ion binding"/>
    <property type="evidence" value="ECO:0007669"/>
    <property type="project" value="UniProtKB-UniRule"/>
</dbReference>
<dbReference type="GO" id="GO:0000105">
    <property type="term" value="P:L-histidine biosynthetic process"/>
    <property type="evidence" value="ECO:0007669"/>
    <property type="project" value="UniProtKB-UniRule"/>
</dbReference>
<dbReference type="CDD" id="cd06572">
    <property type="entry name" value="Histidinol_dh"/>
    <property type="match status" value="1"/>
</dbReference>
<dbReference type="FunFam" id="3.40.50.1980:FF:000001">
    <property type="entry name" value="Histidinol dehydrogenase"/>
    <property type="match status" value="1"/>
</dbReference>
<dbReference type="FunFam" id="3.40.50.1980:FF:000026">
    <property type="entry name" value="Histidinol dehydrogenase"/>
    <property type="match status" value="1"/>
</dbReference>
<dbReference type="Gene3D" id="1.20.5.1300">
    <property type="match status" value="1"/>
</dbReference>
<dbReference type="Gene3D" id="3.40.50.1980">
    <property type="entry name" value="Nitrogenase molybdenum iron protein domain"/>
    <property type="match status" value="2"/>
</dbReference>
<dbReference type="HAMAP" id="MF_01024">
    <property type="entry name" value="HisD"/>
    <property type="match status" value="1"/>
</dbReference>
<dbReference type="InterPro" id="IPR016161">
    <property type="entry name" value="Ald_DH/histidinol_DH"/>
</dbReference>
<dbReference type="InterPro" id="IPR001692">
    <property type="entry name" value="Histidinol_DH_CS"/>
</dbReference>
<dbReference type="InterPro" id="IPR022695">
    <property type="entry name" value="Histidinol_DH_monofunct"/>
</dbReference>
<dbReference type="InterPro" id="IPR012131">
    <property type="entry name" value="Hstdl_DH"/>
</dbReference>
<dbReference type="NCBIfam" id="TIGR00069">
    <property type="entry name" value="hisD"/>
    <property type="match status" value="1"/>
</dbReference>
<dbReference type="NCBIfam" id="NF010343">
    <property type="entry name" value="PRK13770.1"/>
    <property type="match status" value="1"/>
</dbReference>
<dbReference type="PANTHER" id="PTHR21256:SF2">
    <property type="entry name" value="HISTIDINE BIOSYNTHESIS TRIFUNCTIONAL PROTEIN"/>
    <property type="match status" value="1"/>
</dbReference>
<dbReference type="PANTHER" id="PTHR21256">
    <property type="entry name" value="HISTIDINOL DEHYDROGENASE HDH"/>
    <property type="match status" value="1"/>
</dbReference>
<dbReference type="Pfam" id="PF00815">
    <property type="entry name" value="Histidinol_dh"/>
    <property type="match status" value="1"/>
</dbReference>
<dbReference type="PIRSF" id="PIRSF000099">
    <property type="entry name" value="Histidinol_dh"/>
    <property type="match status" value="1"/>
</dbReference>
<dbReference type="PRINTS" id="PR00083">
    <property type="entry name" value="HOLDHDRGNASE"/>
</dbReference>
<dbReference type="SUPFAM" id="SSF53720">
    <property type="entry name" value="ALDH-like"/>
    <property type="match status" value="1"/>
</dbReference>
<dbReference type="PROSITE" id="PS00611">
    <property type="entry name" value="HISOL_DEHYDROGENASE"/>
    <property type="match status" value="1"/>
</dbReference>
<sequence length="418" mass="46389">MPMLNAQQFLNQFSLEAPLDESLYPIIRDICQEVKVHGDKALKMYNLTFDHTKTDHLEISHEQIKAAFDTLDEKTKQALQQSYERIKAYQESIKQTNQQLEESVECYEIYHPLESVGIYVPGGKASYPSTVLMTATLAQVAGVENIVVVTPPQPNGVSQEVLAACYITQVNQVFQVGGAQSIAALTYGTETIPKVDKIVGPGNQFVAYAKKYLFGQVGIDQIAGPTEIALIIDDTADLDAIVYDVFAQAEHDELARTYVIGEDAQVLKDLESRIAKALPNVDRYDIVSKSIANQHYLIHASNFDEACHVMNTIAPEHASIQTVNPQPYIEKVKYVGALFIGHYSPEVIGDYVAGPSHVLPTNRTARFTNGLSVNDFLTRNTVIHLSKDTFEQIADSAQHIAHVEALYNHQQSILIRQS</sequence>
<proteinExistence type="inferred from homology"/>
<feature type="chain" id="PRO_0000135851" description="Histidinol dehydrogenase">
    <location>
        <begin position="1"/>
        <end position="418"/>
    </location>
</feature>
<feature type="active site" description="Proton acceptor" evidence="1">
    <location>
        <position position="316"/>
    </location>
</feature>
<feature type="active site" description="Proton acceptor" evidence="1">
    <location>
        <position position="317"/>
    </location>
</feature>
<feature type="binding site" evidence="1">
    <location>
        <position position="119"/>
    </location>
    <ligand>
        <name>NAD(+)</name>
        <dbReference type="ChEBI" id="CHEBI:57540"/>
    </ligand>
</feature>
<feature type="binding site" evidence="1">
    <location>
        <position position="180"/>
    </location>
    <ligand>
        <name>NAD(+)</name>
        <dbReference type="ChEBI" id="CHEBI:57540"/>
    </ligand>
</feature>
<feature type="binding site" evidence="1">
    <location>
        <position position="203"/>
    </location>
    <ligand>
        <name>NAD(+)</name>
        <dbReference type="ChEBI" id="CHEBI:57540"/>
    </ligand>
</feature>
<feature type="binding site" evidence="1">
    <location>
        <position position="226"/>
    </location>
    <ligand>
        <name>substrate</name>
    </ligand>
</feature>
<feature type="binding site" evidence="1">
    <location>
        <position position="248"/>
    </location>
    <ligand>
        <name>substrate</name>
    </ligand>
</feature>
<feature type="binding site" evidence="1">
    <location>
        <position position="248"/>
    </location>
    <ligand>
        <name>Zn(2+)</name>
        <dbReference type="ChEBI" id="CHEBI:29105"/>
    </ligand>
</feature>
<feature type="binding site" evidence="1">
    <location>
        <position position="251"/>
    </location>
    <ligand>
        <name>substrate</name>
    </ligand>
</feature>
<feature type="binding site" evidence="1">
    <location>
        <position position="251"/>
    </location>
    <ligand>
        <name>Zn(2+)</name>
        <dbReference type="ChEBI" id="CHEBI:29105"/>
    </ligand>
</feature>
<feature type="binding site" evidence="1">
    <location>
        <position position="317"/>
    </location>
    <ligand>
        <name>substrate</name>
    </ligand>
</feature>
<feature type="binding site" evidence="1">
    <location>
        <position position="350"/>
    </location>
    <ligand>
        <name>substrate</name>
    </ligand>
</feature>
<feature type="binding site" evidence="1">
    <location>
        <position position="350"/>
    </location>
    <ligand>
        <name>Zn(2+)</name>
        <dbReference type="ChEBI" id="CHEBI:29105"/>
    </ligand>
</feature>
<feature type="binding site" evidence="1">
    <location>
        <position position="404"/>
    </location>
    <ligand>
        <name>substrate</name>
    </ligand>
</feature>
<feature type="binding site" evidence="1">
    <location>
        <position position="409"/>
    </location>
    <ligand>
        <name>substrate</name>
    </ligand>
</feature>
<feature type="binding site" evidence="1">
    <location>
        <position position="409"/>
    </location>
    <ligand>
        <name>Zn(2+)</name>
        <dbReference type="ChEBI" id="CHEBI:29105"/>
    </ligand>
</feature>
<gene>
    <name evidence="1" type="primary">hisD</name>
    <name type="ordered locus">SAS2563</name>
</gene>
<evidence type="ECO:0000255" key="1">
    <source>
        <dbReference type="HAMAP-Rule" id="MF_01024"/>
    </source>
</evidence>
<name>HISX_STAAS</name>
<keyword id="KW-0028">Amino-acid biosynthesis</keyword>
<keyword id="KW-0368">Histidine biosynthesis</keyword>
<keyword id="KW-0479">Metal-binding</keyword>
<keyword id="KW-0520">NAD</keyword>
<keyword id="KW-0560">Oxidoreductase</keyword>
<keyword id="KW-0862">Zinc</keyword>
<accession>Q6G5Z7</accession>
<comment type="function">
    <text evidence="1">Catalyzes the sequential NAD-dependent oxidations of L-histidinol to L-histidinaldehyde and then to L-histidine.</text>
</comment>
<comment type="catalytic activity">
    <reaction evidence="1">
        <text>L-histidinol + 2 NAD(+) + H2O = L-histidine + 2 NADH + 3 H(+)</text>
        <dbReference type="Rhea" id="RHEA:20641"/>
        <dbReference type="ChEBI" id="CHEBI:15377"/>
        <dbReference type="ChEBI" id="CHEBI:15378"/>
        <dbReference type="ChEBI" id="CHEBI:57540"/>
        <dbReference type="ChEBI" id="CHEBI:57595"/>
        <dbReference type="ChEBI" id="CHEBI:57699"/>
        <dbReference type="ChEBI" id="CHEBI:57945"/>
        <dbReference type="EC" id="1.1.1.23"/>
    </reaction>
</comment>
<comment type="cofactor">
    <cofactor evidence="1">
        <name>Zn(2+)</name>
        <dbReference type="ChEBI" id="CHEBI:29105"/>
    </cofactor>
    <text evidence="1">Binds 1 zinc ion per subunit.</text>
</comment>
<comment type="pathway">
    <text evidence="1">Amino-acid biosynthesis; L-histidine biosynthesis; L-histidine from 5-phospho-alpha-D-ribose 1-diphosphate: step 9/9.</text>
</comment>
<comment type="similarity">
    <text evidence="1">Belongs to the histidinol dehydrogenase family.</text>
</comment>
<protein>
    <recommendedName>
        <fullName evidence="1">Histidinol dehydrogenase</fullName>
        <shortName evidence="1">HDH</shortName>
        <ecNumber evidence="1">1.1.1.23</ecNumber>
    </recommendedName>
</protein>
<reference key="1">
    <citation type="journal article" date="2004" name="Proc. Natl. Acad. Sci. U.S.A.">
        <title>Complete genomes of two clinical Staphylococcus aureus strains: evidence for the rapid evolution of virulence and drug resistance.</title>
        <authorList>
            <person name="Holden M.T.G."/>
            <person name="Feil E.J."/>
            <person name="Lindsay J.A."/>
            <person name="Peacock S.J."/>
            <person name="Day N.P.J."/>
            <person name="Enright M.C."/>
            <person name="Foster T.J."/>
            <person name="Moore C.E."/>
            <person name="Hurst L."/>
            <person name="Atkin R."/>
            <person name="Barron A."/>
            <person name="Bason N."/>
            <person name="Bentley S.D."/>
            <person name="Chillingworth C."/>
            <person name="Chillingworth T."/>
            <person name="Churcher C."/>
            <person name="Clark L."/>
            <person name="Corton C."/>
            <person name="Cronin A."/>
            <person name="Doggett J."/>
            <person name="Dowd L."/>
            <person name="Feltwell T."/>
            <person name="Hance Z."/>
            <person name="Harris B."/>
            <person name="Hauser H."/>
            <person name="Holroyd S."/>
            <person name="Jagels K."/>
            <person name="James K.D."/>
            <person name="Lennard N."/>
            <person name="Line A."/>
            <person name="Mayes R."/>
            <person name="Moule S."/>
            <person name="Mungall K."/>
            <person name="Ormond D."/>
            <person name="Quail M.A."/>
            <person name="Rabbinowitsch E."/>
            <person name="Rutherford K.M."/>
            <person name="Sanders M."/>
            <person name="Sharp S."/>
            <person name="Simmonds M."/>
            <person name="Stevens K."/>
            <person name="Whitehead S."/>
            <person name="Barrell B.G."/>
            <person name="Spratt B.G."/>
            <person name="Parkhill J."/>
        </authorList>
    </citation>
    <scope>NUCLEOTIDE SEQUENCE [LARGE SCALE GENOMIC DNA]</scope>
    <source>
        <strain>MSSA476</strain>
    </source>
</reference>